<dbReference type="EC" id="3.1.-.-"/>
<dbReference type="EMBL" id="AE000512">
    <property type="protein sequence ID" value="AAD36612.1"/>
    <property type="molecule type" value="Genomic_DNA"/>
</dbReference>
<dbReference type="PIR" id="E72243">
    <property type="entry name" value="E72243"/>
</dbReference>
<dbReference type="RefSeq" id="NP_229345.1">
    <property type="nucleotide sequence ID" value="NC_000853.1"/>
</dbReference>
<dbReference type="RefSeq" id="WP_010865357.1">
    <property type="nucleotide sequence ID" value="NZ_CP011107.1"/>
</dbReference>
<dbReference type="SMR" id="Q9X1N1"/>
<dbReference type="STRING" id="243274.TM_1545"/>
<dbReference type="PaxDb" id="243274-THEMA_06555"/>
<dbReference type="DNASU" id="897559"/>
<dbReference type="EnsemblBacteria" id="AAD36612">
    <property type="protein sequence ID" value="AAD36612"/>
    <property type="gene ID" value="TM_1545"/>
</dbReference>
<dbReference type="KEGG" id="tma:TM1545"/>
<dbReference type="PATRIC" id="fig|243274.5.peg.1563"/>
<dbReference type="eggNOG" id="COG0816">
    <property type="taxonomic scope" value="Bacteria"/>
</dbReference>
<dbReference type="InParanoid" id="Q9X1N1"/>
<dbReference type="OrthoDB" id="44843at2"/>
<dbReference type="Proteomes" id="UP000008183">
    <property type="component" value="Chromosome"/>
</dbReference>
<dbReference type="GO" id="GO:0005737">
    <property type="term" value="C:cytoplasm"/>
    <property type="evidence" value="ECO:0007669"/>
    <property type="project" value="UniProtKB-SubCell"/>
</dbReference>
<dbReference type="GO" id="GO:0004518">
    <property type="term" value="F:nuclease activity"/>
    <property type="evidence" value="ECO:0007669"/>
    <property type="project" value="UniProtKB-KW"/>
</dbReference>
<dbReference type="GO" id="GO:0000967">
    <property type="term" value="P:rRNA 5'-end processing"/>
    <property type="evidence" value="ECO:0000318"/>
    <property type="project" value="GO_Central"/>
</dbReference>
<dbReference type="CDD" id="cd16964">
    <property type="entry name" value="YqgF"/>
    <property type="match status" value="1"/>
</dbReference>
<dbReference type="FunFam" id="3.30.420.140:FF:000029">
    <property type="entry name" value="Putative pre-16S rRNA nuclease"/>
    <property type="match status" value="1"/>
</dbReference>
<dbReference type="Gene3D" id="3.30.420.140">
    <property type="entry name" value="YqgF/RNase H-like domain"/>
    <property type="match status" value="1"/>
</dbReference>
<dbReference type="InterPro" id="IPR012337">
    <property type="entry name" value="RNaseH-like_sf"/>
</dbReference>
<dbReference type="InterPro" id="IPR005227">
    <property type="entry name" value="YqgF"/>
</dbReference>
<dbReference type="InterPro" id="IPR006641">
    <property type="entry name" value="YqgF/RNaseH-like_dom"/>
</dbReference>
<dbReference type="InterPro" id="IPR037027">
    <property type="entry name" value="YqgF/RNaseH-like_dom_sf"/>
</dbReference>
<dbReference type="PANTHER" id="PTHR33317">
    <property type="entry name" value="POLYNUCLEOTIDYL TRANSFERASE, RIBONUCLEASE H-LIKE SUPERFAMILY PROTEIN"/>
    <property type="match status" value="1"/>
</dbReference>
<dbReference type="PANTHER" id="PTHR33317:SF4">
    <property type="entry name" value="POLYNUCLEOTIDYL TRANSFERASE, RIBONUCLEASE H-LIKE SUPERFAMILY PROTEIN"/>
    <property type="match status" value="1"/>
</dbReference>
<dbReference type="Pfam" id="PF03652">
    <property type="entry name" value="RuvX"/>
    <property type="match status" value="1"/>
</dbReference>
<dbReference type="SMART" id="SM00732">
    <property type="entry name" value="YqgFc"/>
    <property type="match status" value="1"/>
</dbReference>
<dbReference type="SUPFAM" id="SSF53098">
    <property type="entry name" value="Ribonuclease H-like"/>
    <property type="match status" value="1"/>
</dbReference>
<sequence length="218" mass="24916">MDIQLFQGYGGKVIVAVDYGERKCGVAFGEILPQKSLVIPTKNLKEFIRKLKPDKIIFGLPLSMSGKYTQQTFKTVAVAFKFSKEYETYLCDERLTTKIGERISKRDDAVSAALIFQSFFENSSVCEKVTDPRKKVDLALEKVDGEVLLYEFPDPSLNIEAREVDVVTKNPVLAYFYSKNGYFVGRELWEKKYDLIISGKNCEELKKYLKENGRLVCL</sequence>
<organism>
    <name type="scientific">Thermotoga maritima (strain ATCC 43589 / DSM 3109 / JCM 10099 / NBRC 100826 / MSB8)</name>
    <dbReference type="NCBI Taxonomy" id="243274"/>
    <lineage>
        <taxon>Bacteria</taxon>
        <taxon>Thermotogati</taxon>
        <taxon>Thermotogota</taxon>
        <taxon>Thermotogae</taxon>
        <taxon>Thermotogales</taxon>
        <taxon>Thermotogaceae</taxon>
        <taxon>Thermotoga</taxon>
    </lineage>
</organism>
<name>YQGF_THEMA</name>
<protein>
    <recommendedName>
        <fullName evidence="1">Putative pre-16S rRNA nuclease</fullName>
        <ecNumber>3.1.-.-</ecNumber>
    </recommendedName>
</protein>
<feature type="chain" id="PRO_0000172162" description="Putative pre-16S rRNA nuclease">
    <location>
        <begin position="1"/>
        <end position="218"/>
    </location>
</feature>
<comment type="function">
    <text evidence="1">Could be a nuclease involved in processing of the 5'-end of pre-16S rRNA.</text>
</comment>
<comment type="subcellular location">
    <subcellularLocation>
        <location evidence="1">Cytoplasm</location>
    </subcellularLocation>
</comment>
<comment type="similarity">
    <text evidence="1">Belongs to the YqgF nuclease family.</text>
</comment>
<keyword id="KW-0963">Cytoplasm</keyword>
<keyword id="KW-0378">Hydrolase</keyword>
<keyword id="KW-0540">Nuclease</keyword>
<keyword id="KW-1185">Reference proteome</keyword>
<keyword id="KW-0690">Ribosome biogenesis</keyword>
<reference key="1">
    <citation type="journal article" date="1999" name="Nature">
        <title>Evidence for lateral gene transfer between Archaea and Bacteria from genome sequence of Thermotoga maritima.</title>
        <authorList>
            <person name="Nelson K.E."/>
            <person name="Clayton R.A."/>
            <person name="Gill S.R."/>
            <person name="Gwinn M.L."/>
            <person name="Dodson R.J."/>
            <person name="Haft D.H."/>
            <person name="Hickey E.K."/>
            <person name="Peterson J.D."/>
            <person name="Nelson W.C."/>
            <person name="Ketchum K.A."/>
            <person name="McDonald L.A."/>
            <person name="Utterback T.R."/>
            <person name="Malek J.A."/>
            <person name="Linher K.D."/>
            <person name="Garrett M.M."/>
            <person name="Stewart A.M."/>
            <person name="Cotton M.D."/>
            <person name="Pratt M.S."/>
            <person name="Phillips C.A."/>
            <person name="Richardson D.L."/>
            <person name="Heidelberg J.F."/>
            <person name="Sutton G.G."/>
            <person name="Fleischmann R.D."/>
            <person name="Eisen J.A."/>
            <person name="White O."/>
            <person name="Salzberg S.L."/>
            <person name="Smith H.O."/>
            <person name="Venter J.C."/>
            <person name="Fraser C.M."/>
        </authorList>
    </citation>
    <scope>NUCLEOTIDE SEQUENCE [LARGE SCALE GENOMIC DNA]</scope>
    <source>
        <strain>ATCC 43589 / DSM 3109 / JCM 10099 / NBRC 100826 / MSB8</strain>
    </source>
</reference>
<accession>Q9X1N1</accession>
<proteinExistence type="inferred from homology"/>
<evidence type="ECO:0000305" key="1"/>
<gene>
    <name type="ordered locus">TM_1545</name>
</gene>